<comment type="function">
    <text evidence="1">Specifically methylates guanosine-37 in various tRNAs.</text>
</comment>
<comment type="catalytic activity">
    <reaction evidence="1">
        <text>guanosine(37) in tRNA + S-adenosyl-L-methionine = N(1)-methylguanosine(37) in tRNA + S-adenosyl-L-homocysteine + H(+)</text>
        <dbReference type="Rhea" id="RHEA:36899"/>
        <dbReference type="Rhea" id="RHEA-COMP:10145"/>
        <dbReference type="Rhea" id="RHEA-COMP:10147"/>
        <dbReference type="ChEBI" id="CHEBI:15378"/>
        <dbReference type="ChEBI" id="CHEBI:57856"/>
        <dbReference type="ChEBI" id="CHEBI:59789"/>
        <dbReference type="ChEBI" id="CHEBI:73542"/>
        <dbReference type="ChEBI" id="CHEBI:74269"/>
        <dbReference type="EC" id="2.1.1.228"/>
    </reaction>
</comment>
<comment type="subunit">
    <text evidence="1">Homodimer.</text>
</comment>
<comment type="subcellular location">
    <subcellularLocation>
        <location evidence="1">Cytoplasm</location>
    </subcellularLocation>
</comment>
<comment type="similarity">
    <text evidence="1">Belongs to the RNA methyltransferase TrmD family.</text>
</comment>
<reference key="1">
    <citation type="journal article" date="2009" name="J. Bacteriol.">
        <title>Complete genome sequence of Rhodobacter sphaeroides KD131.</title>
        <authorList>
            <person name="Lim S.-K."/>
            <person name="Kim S.J."/>
            <person name="Cha S.H."/>
            <person name="Oh Y.-K."/>
            <person name="Rhee H.-J."/>
            <person name="Kim M.-S."/>
            <person name="Lee J.K."/>
        </authorList>
    </citation>
    <scope>NUCLEOTIDE SEQUENCE [LARGE SCALE GENOMIC DNA]</scope>
    <source>
        <strain>KD131 / KCTC 12085</strain>
    </source>
</reference>
<keyword id="KW-0963">Cytoplasm</keyword>
<keyword id="KW-0489">Methyltransferase</keyword>
<keyword id="KW-0949">S-adenosyl-L-methionine</keyword>
<keyword id="KW-0808">Transferase</keyword>
<keyword id="KW-0819">tRNA processing</keyword>
<gene>
    <name evidence="1" type="primary">trmD</name>
    <name type="ordered locus">RSKD131_2439</name>
</gene>
<accession>B9KNX7</accession>
<feature type="chain" id="PRO_1000198581" description="tRNA (guanine-N(1)-)-methyltransferase">
    <location>
        <begin position="1"/>
        <end position="249"/>
    </location>
</feature>
<feature type="binding site" evidence="1">
    <location>
        <position position="121"/>
    </location>
    <ligand>
        <name>S-adenosyl-L-methionine</name>
        <dbReference type="ChEBI" id="CHEBI:59789"/>
    </ligand>
</feature>
<feature type="binding site" evidence="1">
    <location>
        <begin position="141"/>
        <end position="146"/>
    </location>
    <ligand>
        <name>S-adenosyl-L-methionine</name>
        <dbReference type="ChEBI" id="CHEBI:59789"/>
    </ligand>
</feature>
<name>TRMD_CERSK</name>
<organism>
    <name type="scientific">Cereibacter sphaeroides (strain KD131 / KCTC 12085)</name>
    <name type="common">Rhodobacter sphaeroides</name>
    <dbReference type="NCBI Taxonomy" id="557760"/>
    <lineage>
        <taxon>Bacteria</taxon>
        <taxon>Pseudomonadati</taxon>
        <taxon>Pseudomonadota</taxon>
        <taxon>Alphaproteobacteria</taxon>
        <taxon>Rhodobacterales</taxon>
        <taxon>Paracoccaceae</taxon>
        <taxon>Cereibacter</taxon>
    </lineage>
</organism>
<sequence length="249" mass="27477">MLKGAWQARIVTLFPEAFPGTLGLSLTGKALEMGLWSLETIDLRPFGEGRHRNVDDNPAGGGAGMVLRADIVARALDAASVGTPSERSRWPVVYLSPRGKPFSQAMARDWAGAEGLTLLCGRFEGVDQRVLDAYAVEEVSLGDFVLTGGEIAAQALIDATVRLIPRVLGNHASTEEESFSEGLLEFPQYTRPTVWQDRTIPEVLLSGHHANIARWRRAEAERLTKERRPDLWRAYCAARGRDPDEDREL</sequence>
<dbReference type="EC" id="2.1.1.228" evidence="1"/>
<dbReference type="EMBL" id="CP001150">
    <property type="protein sequence ID" value="ACM02299.1"/>
    <property type="molecule type" value="Genomic_DNA"/>
</dbReference>
<dbReference type="SMR" id="B9KNX7"/>
<dbReference type="KEGG" id="rsk:RSKD131_2439"/>
<dbReference type="HOGENOM" id="CLU_047363_0_1_5"/>
<dbReference type="GO" id="GO:0005829">
    <property type="term" value="C:cytosol"/>
    <property type="evidence" value="ECO:0007669"/>
    <property type="project" value="TreeGrafter"/>
</dbReference>
<dbReference type="GO" id="GO:0052906">
    <property type="term" value="F:tRNA (guanine(37)-N1)-methyltransferase activity"/>
    <property type="evidence" value="ECO:0007669"/>
    <property type="project" value="UniProtKB-UniRule"/>
</dbReference>
<dbReference type="GO" id="GO:0002939">
    <property type="term" value="P:tRNA N1-guanine methylation"/>
    <property type="evidence" value="ECO:0007669"/>
    <property type="project" value="TreeGrafter"/>
</dbReference>
<dbReference type="CDD" id="cd18080">
    <property type="entry name" value="TrmD-like"/>
    <property type="match status" value="1"/>
</dbReference>
<dbReference type="Gene3D" id="3.40.1280.10">
    <property type="match status" value="1"/>
</dbReference>
<dbReference type="Gene3D" id="1.10.1270.20">
    <property type="entry name" value="tRNA(m1g37)methyltransferase, domain 2"/>
    <property type="match status" value="1"/>
</dbReference>
<dbReference type="HAMAP" id="MF_00605">
    <property type="entry name" value="TrmD"/>
    <property type="match status" value="1"/>
</dbReference>
<dbReference type="InterPro" id="IPR029028">
    <property type="entry name" value="Alpha/beta_knot_MTases"/>
</dbReference>
<dbReference type="InterPro" id="IPR023148">
    <property type="entry name" value="tRNA_m1G_MeTrfase_C_sf"/>
</dbReference>
<dbReference type="InterPro" id="IPR002649">
    <property type="entry name" value="tRNA_m1G_MeTrfase_TrmD"/>
</dbReference>
<dbReference type="InterPro" id="IPR029026">
    <property type="entry name" value="tRNA_m1G_MTases_N"/>
</dbReference>
<dbReference type="InterPro" id="IPR016009">
    <property type="entry name" value="tRNA_MeTrfase_TRMD/TRM10"/>
</dbReference>
<dbReference type="NCBIfam" id="NF000648">
    <property type="entry name" value="PRK00026.1"/>
    <property type="match status" value="1"/>
</dbReference>
<dbReference type="NCBIfam" id="TIGR00088">
    <property type="entry name" value="trmD"/>
    <property type="match status" value="1"/>
</dbReference>
<dbReference type="PANTHER" id="PTHR46417">
    <property type="entry name" value="TRNA (GUANINE-N(1)-)-METHYLTRANSFERASE"/>
    <property type="match status" value="1"/>
</dbReference>
<dbReference type="PANTHER" id="PTHR46417:SF1">
    <property type="entry name" value="TRNA (GUANINE-N(1)-)-METHYLTRANSFERASE"/>
    <property type="match status" value="1"/>
</dbReference>
<dbReference type="Pfam" id="PF01746">
    <property type="entry name" value="tRNA_m1G_MT"/>
    <property type="match status" value="1"/>
</dbReference>
<dbReference type="PIRSF" id="PIRSF000386">
    <property type="entry name" value="tRNA_mtase"/>
    <property type="match status" value="1"/>
</dbReference>
<dbReference type="SUPFAM" id="SSF75217">
    <property type="entry name" value="alpha/beta knot"/>
    <property type="match status" value="1"/>
</dbReference>
<evidence type="ECO:0000255" key="1">
    <source>
        <dbReference type="HAMAP-Rule" id="MF_00605"/>
    </source>
</evidence>
<protein>
    <recommendedName>
        <fullName evidence="1">tRNA (guanine-N(1)-)-methyltransferase</fullName>
        <ecNumber evidence="1">2.1.1.228</ecNumber>
    </recommendedName>
    <alternativeName>
        <fullName evidence="1">M1G-methyltransferase</fullName>
    </alternativeName>
    <alternativeName>
        <fullName evidence="1">tRNA [GM37] methyltransferase</fullName>
    </alternativeName>
</protein>
<proteinExistence type="inferred from homology"/>